<sequence>MPIVELADPICPVCEFPSNVELHFGGLVCGACAAFFRRTVSLNIRYLCEKNNQCKGMRKNCRACRFDYCVKIAGMKRNLVKQRRNSTNTPMYILNRRKDSGNEEVVRGMLKRMYLQFSSFSGFVTTTQSKWAHHSRKSSMSPNKEAEKDVSKILKISHGSLLKYYIYQITHDKRNNMNTLNIKSVEEFLEITSVQNKLAAELCKTCPGVDLLDNEDILILRKYFQFSNVWIESTWNYLRENNSVPIDDSELDLKLLKFINQVKSTLLVSFSQLKFNTIEFAAFKSICIWKLVYHETSRAMKIIAQEHYESVMKALNDYYQTYTSMDSMQIATRIGEITLLIISVFQMYHDMAKLYIQLGLPF</sequence>
<gene>
    <name type="primary">nhr-77</name>
    <name type="ORF">T15D6.6</name>
</gene>
<accession>O02316</accession>
<feature type="chain" id="PRO_0000223581" description="Nuclear hormone receptor family member nhr-77">
    <location>
        <begin position="1"/>
        <end position="362"/>
    </location>
</feature>
<feature type="domain" description="NR LBD" evidence="2">
    <location>
        <begin position="145"/>
        <end position="362"/>
    </location>
</feature>
<feature type="DNA-binding region" description="Nuclear receptor" evidence="1">
    <location>
        <begin position="8"/>
        <end position="82"/>
    </location>
</feature>
<feature type="zinc finger region" description="NR C4-type" evidence="1">
    <location>
        <begin position="11"/>
        <end position="32"/>
    </location>
</feature>
<feature type="zinc finger region" description="NR C4-type" evidence="1">
    <location>
        <begin position="48"/>
        <end position="69"/>
    </location>
</feature>
<evidence type="ECO:0000255" key="1">
    <source>
        <dbReference type="PROSITE-ProRule" id="PRU00407"/>
    </source>
</evidence>
<evidence type="ECO:0000255" key="2">
    <source>
        <dbReference type="PROSITE-ProRule" id="PRU01189"/>
    </source>
</evidence>
<evidence type="ECO:0000305" key="3"/>
<proteinExistence type="inferred from homology"/>
<reference key="1">
    <citation type="journal article" date="1998" name="Science">
        <title>Genome sequence of the nematode C. elegans: a platform for investigating biology.</title>
        <authorList>
            <consortium name="The C. elegans sequencing consortium"/>
        </authorList>
    </citation>
    <scope>NUCLEOTIDE SEQUENCE [LARGE SCALE GENOMIC DNA]</scope>
    <source>
        <strain>Bristol N2</strain>
    </source>
</reference>
<name>NHR77_CAEEL</name>
<protein>
    <recommendedName>
        <fullName>Nuclear hormone receptor family member nhr-77</fullName>
    </recommendedName>
</protein>
<organism>
    <name type="scientific">Caenorhabditis elegans</name>
    <dbReference type="NCBI Taxonomy" id="6239"/>
    <lineage>
        <taxon>Eukaryota</taxon>
        <taxon>Metazoa</taxon>
        <taxon>Ecdysozoa</taxon>
        <taxon>Nematoda</taxon>
        <taxon>Chromadorea</taxon>
        <taxon>Rhabditida</taxon>
        <taxon>Rhabditina</taxon>
        <taxon>Rhabditomorpha</taxon>
        <taxon>Rhabditoidea</taxon>
        <taxon>Rhabditidae</taxon>
        <taxon>Peloderinae</taxon>
        <taxon>Caenorhabditis</taxon>
    </lineage>
</organism>
<keyword id="KW-0238">DNA-binding</keyword>
<keyword id="KW-0479">Metal-binding</keyword>
<keyword id="KW-0539">Nucleus</keyword>
<keyword id="KW-0675">Receptor</keyword>
<keyword id="KW-1185">Reference proteome</keyword>
<keyword id="KW-0804">Transcription</keyword>
<keyword id="KW-0805">Transcription regulation</keyword>
<keyword id="KW-0862">Zinc</keyword>
<keyword id="KW-0863">Zinc-finger</keyword>
<dbReference type="EMBL" id="Z83125">
    <property type="protein sequence ID" value="CAB05622.2"/>
    <property type="molecule type" value="Genomic_DNA"/>
</dbReference>
<dbReference type="PIR" id="T24931">
    <property type="entry name" value="T24931"/>
</dbReference>
<dbReference type="RefSeq" id="NP_493137.2">
    <property type="nucleotide sequence ID" value="NM_060736.4"/>
</dbReference>
<dbReference type="SMR" id="O02316"/>
<dbReference type="FunCoup" id="O02316">
    <property type="interactions" value="173"/>
</dbReference>
<dbReference type="STRING" id="6239.T15D6.6.1"/>
<dbReference type="PaxDb" id="6239-T15D6.6"/>
<dbReference type="EnsemblMetazoa" id="T15D6.6.1">
    <property type="protein sequence ID" value="T15D6.6.1"/>
    <property type="gene ID" value="WBGene00003667"/>
</dbReference>
<dbReference type="GeneID" id="191726"/>
<dbReference type="KEGG" id="cel:CELE_T15D6.6"/>
<dbReference type="UCSC" id="T15D6.6">
    <property type="organism name" value="c. elegans"/>
</dbReference>
<dbReference type="AGR" id="WB:WBGene00003667"/>
<dbReference type="CTD" id="191726"/>
<dbReference type="WormBase" id="T15D6.6">
    <property type="protein sequence ID" value="CE32209"/>
    <property type="gene ID" value="WBGene00003667"/>
    <property type="gene designation" value="nhr-77"/>
</dbReference>
<dbReference type="eggNOG" id="KOG3575">
    <property type="taxonomic scope" value="Eukaryota"/>
</dbReference>
<dbReference type="GeneTree" id="ENSGT00970000195849"/>
<dbReference type="HOGENOM" id="CLU_066719_0_0_1"/>
<dbReference type="InParanoid" id="O02316"/>
<dbReference type="OrthoDB" id="6159439at2759"/>
<dbReference type="PhylomeDB" id="O02316"/>
<dbReference type="PRO" id="PR:O02316"/>
<dbReference type="Proteomes" id="UP000001940">
    <property type="component" value="Chromosome I"/>
</dbReference>
<dbReference type="GO" id="GO:0005634">
    <property type="term" value="C:nucleus"/>
    <property type="evidence" value="ECO:0007669"/>
    <property type="project" value="UniProtKB-SubCell"/>
</dbReference>
<dbReference type="GO" id="GO:0003700">
    <property type="term" value="F:DNA-binding transcription factor activity"/>
    <property type="evidence" value="ECO:0007669"/>
    <property type="project" value="InterPro"/>
</dbReference>
<dbReference type="GO" id="GO:0043565">
    <property type="term" value="F:sequence-specific DNA binding"/>
    <property type="evidence" value="ECO:0007669"/>
    <property type="project" value="InterPro"/>
</dbReference>
<dbReference type="GO" id="GO:0008270">
    <property type="term" value="F:zinc ion binding"/>
    <property type="evidence" value="ECO:0007669"/>
    <property type="project" value="UniProtKB-KW"/>
</dbReference>
<dbReference type="Gene3D" id="3.30.50.10">
    <property type="entry name" value="Erythroid Transcription Factor GATA-1, subunit A"/>
    <property type="match status" value="1"/>
</dbReference>
<dbReference type="Gene3D" id="1.10.565.10">
    <property type="entry name" value="Retinoid X Receptor"/>
    <property type="match status" value="1"/>
</dbReference>
<dbReference type="InterPro" id="IPR035500">
    <property type="entry name" value="NHR-like_dom_sf"/>
</dbReference>
<dbReference type="InterPro" id="IPR000536">
    <property type="entry name" value="Nucl_hrmn_rcpt_lig-bd"/>
</dbReference>
<dbReference type="InterPro" id="IPR001628">
    <property type="entry name" value="Znf_hrmn_rcpt"/>
</dbReference>
<dbReference type="InterPro" id="IPR013088">
    <property type="entry name" value="Znf_NHR/GATA"/>
</dbReference>
<dbReference type="PANTHER" id="PTHR46397:SF3">
    <property type="entry name" value="NR LBD DOMAIN-CONTAINING PROTEIN-RELATED"/>
    <property type="match status" value="1"/>
</dbReference>
<dbReference type="PANTHER" id="PTHR46397">
    <property type="entry name" value="NUCLEAR HORMONE RECEPTOR FAMILY-RELATED"/>
    <property type="match status" value="1"/>
</dbReference>
<dbReference type="Pfam" id="PF00104">
    <property type="entry name" value="Hormone_recep"/>
    <property type="match status" value="1"/>
</dbReference>
<dbReference type="Pfam" id="PF00105">
    <property type="entry name" value="zf-C4"/>
    <property type="match status" value="1"/>
</dbReference>
<dbReference type="SMART" id="SM00430">
    <property type="entry name" value="HOLI"/>
    <property type="match status" value="1"/>
</dbReference>
<dbReference type="SMART" id="SM00399">
    <property type="entry name" value="ZnF_C4"/>
    <property type="match status" value="1"/>
</dbReference>
<dbReference type="SUPFAM" id="SSF57716">
    <property type="entry name" value="Glucocorticoid receptor-like (DNA-binding domain)"/>
    <property type="match status" value="1"/>
</dbReference>
<dbReference type="SUPFAM" id="SSF48508">
    <property type="entry name" value="Nuclear receptor ligand-binding domain"/>
    <property type="match status" value="1"/>
</dbReference>
<dbReference type="PROSITE" id="PS51843">
    <property type="entry name" value="NR_LBD"/>
    <property type="match status" value="1"/>
</dbReference>
<dbReference type="PROSITE" id="PS00031">
    <property type="entry name" value="NUCLEAR_REC_DBD_1"/>
    <property type="match status" value="1"/>
</dbReference>
<dbReference type="PROSITE" id="PS51030">
    <property type="entry name" value="NUCLEAR_REC_DBD_2"/>
    <property type="match status" value="1"/>
</dbReference>
<comment type="function">
    <text>Orphan nuclear receptor.</text>
</comment>
<comment type="subcellular location">
    <subcellularLocation>
        <location evidence="1">Nucleus</location>
    </subcellularLocation>
</comment>
<comment type="similarity">
    <text evidence="3">Belongs to the nuclear hormone receptor family.</text>
</comment>